<comment type="function">
    <text evidence="1">Catalyzes the specific phosphorylation of 1,6-anhydro-N-acetylmuramic acid (anhMurNAc) with the simultaneous cleavage of the 1,6-anhydro ring, generating MurNAc-6-P. Is required for the utilization of anhMurNAc either imported from the medium or derived from its own cell wall murein, and thus plays a role in cell wall recycling.</text>
</comment>
<comment type="catalytic activity">
    <reaction evidence="1">
        <text>1,6-anhydro-N-acetyl-beta-muramate + ATP + H2O = N-acetyl-D-muramate 6-phosphate + ADP + H(+)</text>
        <dbReference type="Rhea" id="RHEA:24952"/>
        <dbReference type="ChEBI" id="CHEBI:15377"/>
        <dbReference type="ChEBI" id="CHEBI:15378"/>
        <dbReference type="ChEBI" id="CHEBI:30616"/>
        <dbReference type="ChEBI" id="CHEBI:58690"/>
        <dbReference type="ChEBI" id="CHEBI:58722"/>
        <dbReference type="ChEBI" id="CHEBI:456216"/>
        <dbReference type="EC" id="2.7.1.170"/>
    </reaction>
</comment>
<comment type="pathway">
    <text evidence="1">Amino-sugar metabolism; 1,6-anhydro-N-acetylmuramate degradation.</text>
</comment>
<comment type="pathway">
    <text evidence="1">Cell wall biogenesis; peptidoglycan recycling.</text>
</comment>
<comment type="similarity">
    <text evidence="1">Belongs to the anhydro-N-acetylmuramic acid kinase family.</text>
</comment>
<proteinExistence type="inferred from homology"/>
<sequence length="377" mass="39525">MPVLEHVDSLLYLGLMSGTSADGIDAALVRFAEDTHRRCELVAGTTVAWEPQLRETLVALGQGAETVAIDALGQLDAQVGLAFAAAANQLIRDSGVERRRIRAIGSHGQTIRHRPEADPAFTWQIGDASRIAEHTGITTVADFRRRDVAAGGQGAPLMPAFHLAMLGAGDQDSAVLNLGGIGNLTLIPRDGAVLGFDTGPANALLDSWCQRHHGTPFDAEGAFAASGRVDAALLQALLADPWFALPPPKSTGREQFHLDWVLQAMGSARLDAADVQATLLELTAASVADALLRLQPSTRRVLVCGGGVRNPVLLARLAARLPGVVVESSARYGLDPDYLEAMGFAWLAAELLAGRAANLPSVTGAAGPRLLGAIYPA</sequence>
<keyword id="KW-0067">ATP-binding</keyword>
<keyword id="KW-0119">Carbohydrate metabolism</keyword>
<keyword id="KW-0418">Kinase</keyword>
<keyword id="KW-0547">Nucleotide-binding</keyword>
<keyword id="KW-0808">Transferase</keyword>
<protein>
    <recommendedName>
        <fullName evidence="1">Anhydro-N-acetylmuramic acid kinase</fullName>
        <ecNumber evidence="1">2.7.1.170</ecNumber>
    </recommendedName>
    <alternativeName>
        <fullName evidence="1">AnhMurNAc kinase</fullName>
    </alternativeName>
</protein>
<name>ANMK_XANOM</name>
<gene>
    <name evidence="1" type="primary">anmK</name>
    <name type="ordered locus">XOO0478</name>
</gene>
<accession>Q2P894</accession>
<dbReference type="EC" id="2.7.1.170" evidence="1"/>
<dbReference type="EMBL" id="AP008229">
    <property type="protein sequence ID" value="BAE67233.1"/>
    <property type="molecule type" value="Genomic_DNA"/>
</dbReference>
<dbReference type="RefSeq" id="WP_011257438.1">
    <property type="nucleotide sequence ID" value="NC_007705.1"/>
</dbReference>
<dbReference type="SMR" id="Q2P894"/>
<dbReference type="KEGG" id="xom:XOO0478"/>
<dbReference type="HOGENOM" id="CLU_038782_0_0_6"/>
<dbReference type="UniPathway" id="UPA00343"/>
<dbReference type="UniPathway" id="UPA00544"/>
<dbReference type="GO" id="GO:0005524">
    <property type="term" value="F:ATP binding"/>
    <property type="evidence" value="ECO:0007669"/>
    <property type="project" value="UniProtKB-UniRule"/>
</dbReference>
<dbReference type="GO" id="GO:0016301">
    <property type="term" value="F:kinase activity"/>
    <property type="evidence" value="ECO:0007669"/>
    <property type="project" value="UniProtKB-KW"/>
</dbReference>
<dbReference type="GO" id="GO:0016773">
    <property type="term" value="F:phosphotransferase activity, alcohol group as acceptor"/>
    <property type="evidence" value="ECO:0007669"/>
    <property type="project" value="UniProtKB-UniRule"/>
</dbReference>
<dbReference type="GO" id="GO:0097175">
    <property type="term" value="P:1,6-anhydro-N-acetyl-beta-muramic acid catabolic process"/>
    <property type="evidence" value="ECO:0007669"/>
    <property type="project" value="UniProtKB-UniRule"/>
</dbReference>
<dbReference type="GO" id="GO:0006040">
    <property type="term" value="P:amino sugar metabolic process"/>
    <property type="evidence" value="ECO:0007669"/>
    <property type="project" value="InterPro"/>
</dbReference>
<dbReference type="GO" id="GO:0009254">
    <property type="term" value="P:peptidoglycan turnover"/>
    <property type="evidence" value="ECO:0007669"/>
    <property type="project" value="UniProtKB-UniRule"/>
</dbReference>
<dbReference type="CDD" id="cd24050">
    <property type="entry name" value="ASKHA_NBD_ANMK"/>
    <property type="match status" value="1"/>
</dbReference>
<dbReference type="Gene3D" id="3.30.420.40">
    <property type="match status" value="2"/>
</dbReference>
<dbReference type="HAMAP" id="MF_01270">
    <property type="entry name" value="AnhMurNAc_kinase"/>
    <property type="match status" value="1"/>
</dbReference>
<dbReference type="InterPro" id="IPR005338">
    <property type="entry name" value="Anhydro_N_Ac-Mur_kinase"/>
</dbReference>
<dbReference type="InterPro" id="IPR043129">
    <property type="entry name" value="ATPase_NBD"/>
</dbReference>
<dbReference type="NCBIfam" id="NF007139">
    <property type="entry name" value="PRK09585.1-3"/>
    <property type="match status" value="1"/>
</dbReference>
<dbReference type="NCBIfam" id="NF007148">
    <property type="entry name" value="PRK09585.3-2"/>
    <property type="match status" value="1"/>
</dbReference>
<dbReference type="PANTHER" id="PTHR30605">
    <property type="entry name" value="ANHYDRO-N-ACETYLMURAMIC ACID KINASE"/>
    <property type="match status" value="1"/>
</dbReference>
<dbReference type="PANTHER" id="PTHR30605:SF0">
    <property type="entry name" value="ANHYDRO-N-ACETYLMURAMIC ACID KINASE"/>
    <property type="match status" value="1"/>
</dbReference>
<dbReference type="Pfam" id="PF03702">
    <property type="entry name" value="AnmK"/>
    <property type="match status" value="1"/>
</dbReference>
<dbReference type="SUPFAM" id="SSF53067">
    <property type="entry name" value="Actin-like ATPase domain"/>
    <property type="match status" value="1"/>
</dbReference>
<evidence type="ECO:0000255" key="1">
    <source>
        <dbReference type="HAMAP-Rule" id="MF_01270"/>
    </source>
</evidence>
<reference key="1">
    <citation type="journal article" date="2005" name="Jpn. Agric. Res. Q.">
        <title>Genome sequence of Xanthomonas oryzae pv. oryzae suggests contribution of large numbers of effector genes and insertion sequences to its race diversity.</title>
        <authorList>
            <person name="Ochiai H."/>
            <person name="Inoue Y."/>
            <person name="Takeya M."/>
            <person name="Sasaki A."/>
            <person name="Kaku H."/>
        </authorList>
    </citation>
    <scope>NUCLEOTIDE SEQUENCE [LARGE SCALE GENOMIC DNA]</scope>
    <source>
        <strain>MAFF 311018</strain>
    </source>
</reference>
<organism>
    <name type="scientific">Xanthomonas oryzae pv. oryzae (strain MAFF 311018)</name>
    <dbReference type="NCBI Taxonomy" id="342109"/>
    <lineage>
        <taxon>Bacteria</taxon>
        <taxon>Pseudomonadati</taxon>
        <taxon>Pseudomonadota</taxon>
        <taxon>Gammaproteobacteria</taxon>
        <taxon>Lysobacterales</taxon>
        <taxon>Lysobacteraceae</taxon>
        <taxon>Xanthomonas</taxon>
    </lineage>
</organism>
<feature type="chain" id="PRO_0000250088" description="Anhydro-N-acetylmuramic acid kinase">
    <location>
        <begin position="1"/>
        <end position="377"/>
    </location>
</feature>
<feature type="binding site" evidence="1">
    <location>
        <begin position="18"/>
        <end position="25"/>
    </location>
    <ligand>
        <name>ATP</name>
        <dbReference type="ChEBI" id="CHEBI:30616"/>
    </ligand>
</feature>